<gene>
    <name evidence="1" type="primary">atpH</name>
    <name type="ordered locus">Csal_3287</name>
</gene>
<name>ATPD_CHRSD</name>
<keyword id="KW-0066">ATP synthesis</keyword>
<keyword id="KW-0997">Cell inner membrane</keyword>
<keyword id="KW-1003">Cell membrane</keyword>
<keyword id="KW-0139">CF(1)</keyword>
<keyword id="KW-0375">Hydrogen ion transport</keyword>
<keyword id="KW-0406">Ion transport</keyword>
<keyword id="KW-0472">Membrane</keyword>
<keyword id="KW-1185">Reference proteome</keyword>
<keyword id="KW-0813">Transport</keyword>
<proteinExistence type="inferred from homology"/>
<protein>
    <recommendedName>
        <fullName evidence="1">ATP synthase subunit delta</fullName>
    </recommendedName>
    <alternativeName>
        <fullName evidence="1">ATP synthase F(1) sector subunit delta</fullName>
    </alternativeName>
    <alternativeName>
        <fullName evidence="1">F-type ATPase subunit delta</fullName>
        <shortName evidence="1">F-ATPase subunit delta</shortName>
    </alternativeName>
</protein>
<accession>Q1QSC7</accession>
<evidence type="ECO:0000255" key="1">
    <source>
        <dbReference type="HAMAP-Rule" id="MF_01416"/>
    </source>
</evidence>
<sequence length="178" mass="19340">MAETSTVARPYAKAAFEYARDHKALEAWSGQLASAKQVAADADFDAKVVSNPKLSHDQKTALLLEVCGELDESLCNFIRTVGSRGRLAALPAIAEQFEVLRAEEEKRVDVTIVSAFDLDAAQQDKLATALKKRLNREISITTRVDRALMGGVILRAGDTVIDGSVRGRLTRLRDALSA</sequence>
<feature type="chain" id="PRO_1000184670" description="ATP synthase subunit delta">
    <location>
        <begin position="1"/>
        <end position="178"/>
    </location>
</feature>
<dbReference type="EMBL" id="CP000285">
    <property type="protein sequence ID" value="ABE60631.1"/>
    <property type="molecule type" value="Genomic_DNA"/>
</dbReference>
<dbReference type="RefSeq" id="WP_011508577.1">
    <property type="nucleotide sequence ID" value="NC_007963.1"/>
</dbReference>
<dbReference type="SMR" id="Q1QSC7"/>
<dbReference type="STRING" id="290398.Csal_3287"/>
<dbReference type="GeneID" id="95335978"/>
<dbReference type="KEGG" id="csa:Csal_3287"/>
<dbReference type="eggNOG" id="COG0712">
    <property type="taxonomic scope" value="Bacteria"/>
</dbReference>
<dbReference type="HOGENOM" id="CLU_085114_3_0_6"/>
<dbReference type="OrthoDB" id="9816221at2"/>
<dbReference type="Proteomes" id="UP000000239">
    <property type="component" value="Chromosome"/>
</dbReference>
<dbReference type="GO" id="GO:0005886">
    <property type="term" value="C:plasma membrane"/>
    <property type="evidence" value="ECO:0007669"/>
    <property type="project" value="UniProtKB-SubCell"/>
</dbReference>
<dbReference type="GO" id="GO:0045259">
    <property type="term" value="C:proton-transporting ATP synthase complex"/>
    <property type="evidence" value="ECO:0007669"/>
    <property type="project" value="UniProtKB-KW"/>
</dbReference>
<dbReference type="GO" id="GO:0046933">
    <property type="term" value="F:proton-transporting ATP synthase activity, rotational mechanism"/>
    <property type="evidence" value="ECO:0007669"/>
    <property type="project" value="UniProtKB-UniRule"/>
</dbReference>
<dbReference type="Gene3D" id="1.10.520.20">
    <property type="entry name" value="N-terminal domain of the delta subunit of the F1F0-ATP synthase"/>
    <property type="match status" value="1"/>
</dbReference>
<dbReference type="HAMAP" id="MF_01416">
    <property type="entry name" value="ATP_synth_delta_bact"/>
    <property type="match status" value="1"/>
</dbReference>
<dbReference type="InterPro" id="IPR026015">
    <property type="entry name" value="ATP_synth_OSCP/delta_N_sf"/>
</dbReference>
<dbReference type="InterPro" id="IPR020781">
    <property type="entry name" value="ATPase_OSCP/d_CS"/>
</dbReference>
<dbReference type="InterPro" id="IPR000711">
    <property type="entry name" value="ATPase_OSCP/dsu"/>
</dbReference>
<dbReference type="NCBIfam" id="TIGR01145">
    <property type="entry name" value="ATP_synt_delta"/>
    <property type="match status" value="1"/>
</dbReference>
<dbReference type="NCBIfam" id="NF004402">
    <property type="entry name" value="PRK05758.2-2"/>
    <property type="match status" value="1"/>
</dbReference>
<dbReference type="PANTHER" id="PTHR11910">
    <property type="entry name" value="ATP SYNTHASE DELTA CHAIN"/>
    <property type="match status" value="1"/>
</dbReference>
<dbReference type="Pfam" id="PF00213">
    <property type="entry name" value="OSCP"/>
    <property type="match status" value="1"/>
</dbReference>
<dbReference type="PRINTS" id="PR00125">
    <property type="entry name" value="ATPASEDELTA"/>
</dbReference>
<dbReference type="SUPFAM" id="SSF47928">
    <property type="entry name" value="N-terminal domain of the delta subunit of the F1F0-ATP synthase"/>
    <property type="match status" value="1"/>
</dbReference>
<dbReference type="PROSITE" id="PS00389">
    <property type="entry name" value="ATPASE_DELTA"/>
    <property type="match status" value="1"/>
</dbReference>
<comment type="function">
    <text evidence="1">F(1)F(0) ATP synthase produces ATP from ADP in the presence of a proton or sodium gradient. F-type ATPases consist of two structural domains, F(1) containing the extramembraneous catalytic core and F(0) containing the membrane proton channel, linked together by a central stalk and a peripheral stalk. During catalysis, ATP synthesis in the catalytic domain of F(1) is coupled via a rotary mechanism of the central stalk subunits to proton translocation.</text>
</comment>
<comment type="function">
    <text evidence="1">This protein is part of the stalk that links CF(0) to CF(1). It either transmits conformational changes from CF(0) to CF(1) or is implicated in proton conduction.</text>
</comment>
<comment type="subunit">
    <text evidence="1">F-type ATPases have 2 components, F(1) - the catalytic core - and F(0) - the membrane proton channel. F(1) has five subunits: alpha(3), beta(3), gamma(1), delta(1), epsilon(1). F(0) has three main subunits: a(1), b(2) and c(10-14). The alpha and beta chains form an alternating ring which encloses part of the gamma chain. F(1) is attached to F(0) by a central stalk formed by the gamma and epsilon chains, while a peripheral stalk is formed by the delta and b chains.</text>
</comment>
<comment type="subcellular location">
    <subcellularLocation>
        <location evidence="1">Cell inner membrane</location>
        <topology evidence="1">Peripheral membrane protein</topology>
    </subcellularLocation>
</comment>
<comment type="similarity">
    <text evidence="1">Belongs to the ATPase delta chain family.</text>
</comment>
<organism>
    <name type="scientific">Chromohalobacter salexigens (strain ATCC BAA-138 / DSM 3043 / CIP 106854 / NCIMB 13768 / 1H11)</name>
    <dbReference type="NCBI Taxonomy" id="290398"/>
    <lineage>
        <taxon>Bacteria</taxon>
        <taxon>Pseudomonadati</taxon>
        <taxon>Pseudomonadota</taxon>
        <taxon>Gammaproteobacteria</taxon>
        <taxon>Oceanospirillales</taxon>
        <taxon>Halomonadaceae</taxon>
        <taxon>Chromohalobacter</taxon>
    </lineage>
</organism>
<reference key="1">
    <citation type="journal article" date="2011" name="Stand. Genomic Sci.">
        <title>Complete genome sequence of the halophilic and highly halotolerant Chromohalobacter salexigens type strain (1H11(T)).</title>
        <authorList>
            <person name="Copeland A."/>
            <person name="O'Connor K."/>
            <person name="Lucas S."/>
            <person name="Lapidus A."/>
            <person name="Berry K.W."/>
            <person name="Detter J.C."/>
            <person name="Del Rio T.G."/>
            <person name="Hammon N."/>
            <person name="Dalin E."/>
            <person name="Tice H."/>
            <person name="Pitluck S."/>
            <person name="Bruce D."/>
            <person name="Goodwin L."/>
            <person name="Han C."/>
            <person name="Tapia R."/>
            <person name="Saunders E."/>
            <person name="Schmutz J."/>
            <person name="Brettin T."/>
            <person name="Larimer F."/>
            <person name="Land M."/>
            <person name="Hauser L."/>
            <person name="Vargas C."/>
            <person name="Nieto J.J."/>
            <person name="Kyrpides N.C."/>
            <person name="Ivanova N."/>
            <person name="Goker M."/>
            <person name="Klenk H.P."/>
            <person name="Csonka L.N."/>
            <person name="Woyke T."/>
        </authorList>
    </citation>
    <scope>NUCLEOTIDE SEQUENCE [LARGE SCALE GENOMIC DNA]</scope>
    <source>
        <strain>ATCC BAA-138 / DSM 3043 / CIP 106854 / NCIMB 13768 / 1H11</strain>
    </source>
</reference>